<feature type="signal peptide" evidence="1">
    <location>
        <begin position="1"/>
        <end position="22"/>
    </location>
</feature>
<feature type="chain" id="PRO_0000450963" description="Conotoxin Cal6.19" evidence="3">
    <location>
        <begin position="23"/>
        <end position="50"/>
    </location>
</feature>
<feature type="disulfide bond" evidence="3">
    <location>
        <begin position="24"/>
        <end position="37"/>
    </location>
</feature>
<feature type="disulfide bond" evidence="3">
    <location>
        <begin position="30"/>
        <end position="41"/>
    </location>
</feature>
<feature type="disulfide bond" evidence="3">
    <location>
        <begin position="36"/>
        <end position="46"/>
    </location>
</feature>
<dbReference type="GO" id="GO:0005576">
    <property type="term" value="C:extracellular region"/>
    <property type="evidence" value="ECO:0007669"/>
    <property type="project" value="UniProtKB-SubCell"/>
</dbReference>
<dbReference type="GO" id="GO:0090729">
    <property type="term" value="F:toxin activity"/>
    <property type="evidence" value="ECO:0007669"/>
    <property type="project" value="UniProtKB-KW"/>
</dbReference>
<accession>P0DTY1</accession>
<reference key="1">
    <citation type="journal article" date="2019" name="Toxins">
        <title>The diversified O-superfamily in Californiconus californicus presents a conotoxin with antimycobacterial activity.</title>
        <authorList>
            <person name="Bernaldez-Sarabia J."/>
            <person name="Figueroa-Montiel A."/>
            <person name="Duenas S."/>
            <person name="Cervantes-Luevano K."/>
            <person name="Beltran J.A."/>
            <person name="Ortiz E."/>
            <person name="Jimenez S."/>
            <person name="Possani L.D."/>
            <person name="Paniagua-Solis J.F."/>
            <person name="Gonzalez-Canudas J."/>
            <person name="Licea-Navarro A."/>
        </authorList>
    </citation>
    <scope>NUCLEOTIDE SEQUENCE [MRNA]</scope>
    <source>
        <tissue>Venom duct</tissue>
    </source>
</reference>
<keyword id="KW-1015">Disulfide bond</keyword>
<keyword id="KW-0960">Knottin</keyword>
<keyword id="KW-0528">Neurotoxin</keyword>
<keyword id="KW-0964">Secreted</keyword>
<keyword id="KW-0732">Signal</keyword>
<keyword id="KW-0800">Toxin</keyword>
<proteinExistence type="inferred from homology"/>
<organism>
    <name type="scientific">Californiconus californicus</name>
    <name type="common">California cone</name>
    <name type="synonym">Conus californicus</name>
    <dbReference type="NCBI Taxonomy" id="1736779"/>
    <lineage>
        <taxon>Eukaryota</taxon>
        <taxon>Metazoa</taxon>
        <taxon>Spiralia</taxon>
        <taxon>Lophotrochozoa</taxon>
        <taxon>Mollusca</taxon>
        <taxon>Gastropoda</taxon>
        <taxon>Caenogastropoda</taxon>
        <taxon>Neogastropoda</taxon>
        <taxon>Conoidea</taxon>
        <taxon>Conidae</taxon>
        <taxon>Californiconus</taxon>
    </lineage>
</organism>
<protein>
    <recommendedName>
        <fullName evidence="3">Conotoxin Cal6.19</fullName>
    </recommendedName>
    <alternativeName>
        <fullName evidence="2">O1_cal6.19</fullName>
    </alternativeName>
</protein>
<sequence length="50" mass="5533">MKVTCVLVLTLMALTVCQVATAYCINVGMCIYDGYCCSNRCWGGMCSPWR</sequence>
<comment type="function">
    <text evidence="3">Probable neurotoxin.</text>
</comment>
<comment type="subcellular location">
    <subcellularLocation>
        <location evidence="4">Secreted</location>
    </subcellularLocation>
</comment>
<comment type="tissue specificity">
    <text evidence="4">Expressed by the venom duct.</text>
</comment>
<comment type="domain">
    <text evidence="3">The cysteine framework is VI/VII (C-C-CC-C-C).</text>
</comment>
<comment type="domain">
    <text evidence="3">The presence of a 'disulfide through disulfide knot' structurally defines this protein as a knottin.</text>
</comment>
<name>C619_CONCL</name>
<evidence type="ECO:0000255" key="1"/>
<evidence type="ECO:0000303" key="2">
    <source>
    </source>
</evidence>
<evidence type="ECO:0000305" key="3"/>
<evidence type="ECO:0000305" key="4">
    <source>
    </source>
</evidence>